<keyword id="KW-0997">Cell inner membrane</keyword>
<keyword id="KW-1003">Cell membrane</keyword>
<keyword id="KW-0201">Cytochrome c-type biogenesis</keyword>
<keyword id="KW-0349">Heme</keyword>
<keyword id="KW-0408">Iron</keyword>
<keyword id="KW-0472">Membrane</keyword>
<keyword id="KW-0479">Metal-binding</keyword>
<keyword id="KW-1185">Reference proteome</keyword>
<keyword id="KW-0735">Signal-anchor</keyword>
<keyword id="KW-0812">Transmembrane</keyword>
<keyword id="KW-1133">Transmembrane helix</keyword>
<feature type="chain" id="PRO_1000189000" description="Cytochrome c-type biogenesis protein CcmE">
    <location>
        <begin position="1"/>
        <end position="149"/>
    </location>
</feature>
<feature type="topological domain" description="Cytoplasmic" evidence="1">
    <location>
        <begin position="1"/>
        <end position="7"/>
    </location>
</feature>
<feature type="transmembrane region" description="Helical; Signal-anchor for type II membrane protein" evidence="1">
    <location>
        <begin position="8"/>
        <end position="28"/>
    </location>
</feature>
<feature type="topological domain" description="Periplasmic" evidence="1">
    <location>
        <begin position="29"/>
        <end position="149"/>
    </location>
</feature>
<feature type="binding site" description="covalent" evidence="1">
    <location>
        <position position="123"/>
    </location>
    <ligand>
        <name>heme</name>
        <dbReference type="ChEBI" id="CHEBI:30413"/>
    </ligand>
</feature>
<feature type="binding site" description="axial binding residue" evidence="1">
    <location>
        <position position="127"/>
    </location>
    <ligand>
        <name>heme</name>
        <dbReference type="ChEBI" id="CHEBI:30413"/>
    </ligand>
    <ligandPart>
        <name>Fe</name>
        <dbReference type="ChEBI" id="CHEBI:18248"/>
    </ligandPart>
</feature>
<evidence type="ECO:0000255" key="1">
    <source>
        <dbReference type="HAMAP-Rule" id="MF_01959"/>
    </source>
</evidence>
<name>CCME_ALLAM</name>
<dbReference type="EMBL" id="CP000633">
    <property type="protein sequence ID" value="ACM35973.1"/>
    <property type="molecule type" value="Genomic_DNA"/>
</dbReference>
<dbReference type="RefSeq" id="WP_015915397.1">
    <property type="nucleotide sequence ID" value="NC_011989.1"/>
</dbReference>
<dbReference type="SMR" id="B9JU45"/>
<dbReference type="STRING" id="311402.Avi_1363"/>
<dbReference type="GeneID" id="60682063"/>
<dbReference type="KEGG" id="avi:Avi_1363"/>
<dbReference type="eggNOG" id="COG2332">
    <property type="taxonomic scope" value="Bacteria"/>
</dbReference>
<dbReference type="HOGENOM" id="CLU_079503_1_1_5"/>
<dbReference type="Proteomes" id="UP000001596">
    <property type="component" value="Chromosome 1"/>
</dbReference>
<dbReference type="GO" id="GO:0005886">
    <property type="term" value="C:plasma membrane"/>
    <property type="evidence" value="ECO:0007669"/>
    <property type="project" value="UniProtKB-SubCell"/>
</dbReference>
<dbReference type="GO" id="GO:0020037">
    <property type="term" value="F:heme binding"/>
    <property type="evidence" value="ECO:0007669"/>
    <property type="project" value="InterPro"/>
</dbReference>
<dbReference type="GO" id="GO:0046872">
    <property type="term" value="F:metal ion binding"/>
    <property type="evidence" value="ECO:0007669"/>
    <property type="project" value="UniProtKB-KW"/>
</dbReference>
<dbReference type="GO" id="GO:0017004">
    <property type="term" value="P:cytochrome complex assembly"/>
    <property type="evidence" value="ECO:0007669"/>
    <property type="project" value="UniProtKB-KW"/>
</dbReference>
<dbReference type="Gene3D" id="2.40.50.140">
    <property type="entry name" value="Nucleic acid-binding proteins"/>
    <property type="match status" value="1"/>
</dbReference>
<dbReference type="HAMAP" id="MF_01959">
    <property type="entry name" value="CcmE"/>
    <property type="match status" value="1"/>
</dbReference>
<dbReference type="InterPro" id="IPR004329">
    <property type="entry name" value="CcmE"/>
</dbReference>
<dbReference type="InterPro" id="IPR036127">
    <property type="entry name" value="CcmE-like_sf"/>
</dbReference>
<dbReference type="InterPro" id="IPR012340">
    <property type="entry name" value="NA-bd_OB-fold"/>
</dbReference>
<dbReference type="NCBIfam" id="NF009727">
    <property type="entry name" value="PRK13254.1-1"/>
    <property type="match status" value="1"/>
</dbReference>
<dbReference type="NCBIfam" id="NF009731">
    <property type="entry name" value="PRK13254.1-5"/>
    <property type="match status" value="1"/>
</dbReference>
<dbReference type="PANTHER" id="PTHR34128">
    <property type="entry name" value="CYTOCHROME C-TYPE BIOGENESIS PROTEIN CCME HOMOLOG, MITOCHONDRIAL"/>
    <property type="match status" value="1"/>
</dbReference>
<dbReference type="PANTHER" id="PTHR34128:SF2">
    <property type="entry name" value="CYTOCHROME C-TYPE BIOGENESIS PROTEIN CCME HOMOLOG, MITOCHONDRIAL"/>
    <property type="match status" value="1"/>
</dbReference>
<dbReference type="Pfam" id="PF03100">
    <property type="entry name" value="CcmE"/>
    <property type="match status" value="1"/>
</dbReference>
<dbReference type="SUPFAM" id="SSF82093">
    <property type="entry name" value="Heme chaperone CcmE"/>
    <property type="match status" value="1"/>
</dbReference>
<gene>
    <name evidence="1" type="primary">ccmE</name>
    <name evidence="1" type="synonym">cycJ</name>
    <name type="ordered locus">Avi_1363</name>
</gene>
<comment type="function">
    <text evidence="1">Heme chaperone required for the biogenesis of c-type cytochromes. Transiently binds heme delivered by CcmC and transfers the heme to apo-cytochromes in a process facilitated by CcmF and CcmH.</text>
</comment>
<comment type="subcellular location">
    <subcellularLocation>
        <location evidence="1">Cell inner membrane</location>
        <topology evidence="1">Single-pass type II membrane protein</topology>
        <orientation evidence="1">Periplasmic side</orientation>
    </subcellularLocation>
</comment>
<comment type="similarity">
    <text evidence="1">Belongs to the CcmE/CycJ family.</text>
</comment>
<proteinExistence type="inferred from homology"/>
<sequence>MTRKQKRLAVIAGGVGFIMVAVLLVLFAFGQSIAYFYMPSDLAKTPVGPGTRIRLGGLVAEGSVKRDTGSTVSFAVTDGTATVPVTYTGILPDLFREGQGVVTEGVFGAGGTLFDADTVLAKHDENYMPKEVADRMKKDGVWKGEGEAK</sequence>
<accession>B9JU45</accession>
<reference key="1">
    <citation type="journal article" date="2009" name="J. Bacteriol.">
        <title>Genome sequences of three Agrobacterium biovars help elucidate the evolution of multichromosome genomes in bacteria.</title>
        <authorList>
            <person name="Slater S.C."/>
            <person name="Goldman B.S."/>
            <person name="Goodner B."/>
            <person name="Setubal J.C."/>
            <person name="Farrand S.K."/>
            <person name="Nester E.W."/>
            <person name="Burr T.J."/>
            <person name="Banta L."/>
            <person name="Dickerman A.W."/>
            <person name="Paulsen I."/>
            <person name="Otten L."/>
            <person name="Suen G."/>
            <person name="Welch R."/>
            <person name="Almeida N.F."/>
            <person name="Arnold F."/>
            <person name="Burton O.T."/>
            <person name="Du Z."/>
            <person name="Ewing A."/>
            <person name="Godsy E."/>
            <person name="Heisel S."/>
            <person name="Houmiel K.L."/>
            <person name="Jhaveri J."/>
            <person name="Lu J."/>
            <person name="Miller N.M."/>
            <person name="Norton S."/>
            <person name="Chen Q."/>
            <person name="Phoolcharoen W."/>
            <person name="Ohlin V."/>
            <person name="Ondrusek D."/>
            <person name="Pride N."/>
            <person name="Stricklin S.L."/>
            <person name="Sun J."/>
            <person name="Wheeler C."/>
            <person name="Wilson L."/>
            <person name="Zhu H."/>
            <person name="Wood D.W."/>
        </authorList>
    </citation>
    <scope>NUCLEOTIDE SEQUENCE [LARGE SCALE GENOMIC DNA]</scope>
    <source>
        <strain>ATCC BAA-846 / DSM 112012 / S4</strain>
    </source>
</reference>
<organism>
    <name type="scientific">Allorhizobium ampelinum (strain ATCC BAA-846 / DSM 112012 / S4)</name>
    <name type="common">Agrobacterium vitis (strain S4)</name>
    <dbReference type="NCBI Taxonomy" id="311402"/>
    <lineage>
        <taxon>Bacteria</taxon>
        <taxon>Pseudomonadati</taxon>
        <taxon>Pseudomonadota</taxon>
        <taxon>Alphaproteobacteria</taxon>
        <taxon>Hyphomicrobiales</taxon>
        <taxon>Rhizobiaceae</taxon>
        <taxon>Rhizobium/Agrobacterium group</taxon>
        <taxon>Allorhizobium</taxon>
        <taxon>Allorhizobium ampelinum</taxon>
    </lineage>
</organism>
<protein>
    <recommendedName>
        <fullName evidence="1">Cytochrome c-type biogenesis protein CcmE</fullName>
    </recommendedName>
    <alternativeName>
        <fullName evidence="1">Cytochrome c maturation protein E</fullName>
    </alternativeName>
    <alternativeName>
        <fullName evidence="1">Heme chaperone CcmE</fullName>
    </alternativeName>
</protein>